<gene>
    <name type="primary">gigyf2</name>
    <name type="synonym">perq2</name>
</gene>
<dbReference type="EMBL" id="BC086295">
    <property type="protein sequence ID" value="AAH86295.1"/>
    <property type="molecule type" value="mRNA"/>
</dbReference>
<dbReference type="RefSeq" id="NP_001088645.1">
    <property type="nucleotide sequence ID" value="NM_001095176.1"/>
</dbReference>
<dbReference type="SMR" id="Q5U236"/>
<dbReference type="BioGRID" id="105778">
    <property type="interactions" value="1"/>
</dbReference>
<dbReference type="IntAct" id="Q5U236">
    <property type="interactions" value="1"/>
</dbReference>
<dbReference type="GeneID" id="495698"/>
<dbReference type="KEGG" id="xla:495698"/>
<dbReference type="AGR" id="Xenbase:XB-GENE-5870341"/>
<dbReference type="CTD" id="495698"/>
<dbReference type="Xenbase" id="XB-GENE-5870341">
    <property type="gene designation" value="gigyf2.S"/>
</dbReference>
<dbReference type="OrthoDB" id="48509at2759"/>
<dbReference type="Proteomes" id="UP000186698">
    <property type="component" value="Chromosome 5S"/>
</dbReference>
<dbReference type="Bgee" id="495698">
    <property type="expression patterns" value="Expressed in testis and 19 other cell types or tissues"/>
</dbReference>
<dbReference type="GO" id="GO:0005829">
    <property type="term" value="C:cytosol"/>
    <property type="evidence" value="ECO:0000318"/>
    <property type="project" value="GO_Central"/>
</dbReference>
<dbReference type="GO" id="GO:0016020">
    <property type="term" value="C:membrane"/>
    <property type="evidence" value="ECO:0000318"/>
    <property type="project" value="GO_Central"/>
</dbReference>
<dbReference type="GO" id="GO:0043204">
    <property type="term" value="C:perikaryon"/>
    <property type="evidence" value="ECO:0000318"/>
    <property type="project" value="GO_Central"/>
</dbReference>
<dbReference type="GO" id="GO:1990635">
    <property type="term" value="C:proximal dendrite"/>
    <property type="evidence" value="ECO:0000318"/>
    <property type="project" value="GO_Central"/>
</dbReference>
<dbReference type="GO" id="GO:0031982">
    <property type="term" value="C:vesicle"/>
    <property type="evidence" value="ECO:0000318"/>
    <property type="project" value="GO_Central"/>
</dbReference>
<dbReference type="GO" id="GO:0048009">
    <property type="term" value="P:insulin-like growth factor receptor signaling pathway"/>
    <property type="evidence" value="ECO:0000318"/>
    <property type="project" value="GO_Central"/>
</dbReference>
<dbReference type="CDD" id="cd00072">
    <property type="entry name" value="GYF"/>
    <property type="match status" value="1"/>
</dbReference>
<dbReference type="Gene3D" id="3.30.1490.40">
    <property type="match status" value="1"/>
</dbReference>
<dbReference type="InterPro" id="IPR051640">
    <property type="entry name" value="GRB10-interact_GYF"/>
</dbReference>
<dbReference type="InterPro" id="IPR003169">
    <property type="entry name" value="GYF"/>
</dbReference>
<dbReference type="InterPro" id="IPR035445">
    <property type="entry name" value="GYF-like_dom_sf"/>
</dbReference>
<dbReference type="PANTHER" id="PTHR14445">
    <property type="entry name" value="GRB10 INTERACTING GYF PROTEIN"/>
    <property type="match status" value="1"/>
</dbReference>
<dbReference type="PANTHER" id="PTHR14445:SF38">
    <property type="entry name" value="GRB10-INTERACTING GYF PROTEIN 2"/>
    <property type="match status" value="1"/>
</dbReference>
<dbReference type="Pfam" id="PF02213">
    <property type="entry name" value="GYF"/>
    <property type="match status" value="1"/>
</dbReference>
<dbReference type="SMART" id="SM00444">
    <property type="entry name" value="GYF"/>
    <property type="match status" value="1"/>
</dbReference>
<dbReference type="SUPFAM" id="SSF55277">
    <property type="entry name" value="GYF domain"/>
    <property type="match status" value="1"/>
</dbReference>
<dbReference type="PROSITE" id="PS50829">
    <property type="entry name" value="GYF"/>
    <property type="match status" value="1"/>
</dbReference>
<protein>
    <recommendedName>
        <fullName>GRB10-interacting GYF protein 2</fullName>
    </recommendedName>
    <alternativeName>
        <fullName>PERQ amino acid-rich with GYF domain-containing protein 2</fullName>
    </alternativeName>
</protein>
<accession>Q5U236</accession>
<evidence type="ECO:0000250" key="1">
    <source>
        <dbReference type="UniProtKB" id="Q6Y7W6"/>
    </source>
</evidence>
<evidence type="ECO:0000250" key="2">
    <source>
        <dbReference type="UniProtKB" id="Q6Y7W8"/>
    </source>
</evidence>
<evidence type="ECO:0000255" key="3">
    <source>
        <dbReference type="PROSITE-ProRule" id="PRU00101"/>
    </source>
</evidence>
<evidence type="ECO:0000256" key="4">
    <source>
        <dbReference type="SAM" id="MobiDB-lite"/>
    </source>
</evidence>
<evidence type="ECO:0000305" key="5"/>
<sequence length="1239" mass="141636">MTAETQTLNFGPEWLRALSSGGSVISPPLSPALPKYKLADFRYGREEMLALYVKDNKVPSDLLDKEFLPILNDEPLLPLALVSFTEEEQRNFSMSVNSAAVLRLTNRGSSGGGGTVVGVPRGRSSSRGRGRGRGESGFYQRSFDEVESGFGRGAREMHRSQSWEERGDRRFEKPARKEPDGVRGSAWREIPDRRRRFDYDLRESKDERGYRRPRSGSGIAEDERDSLPEWCLDDAEDETGTFDSSGAFLSSKPSKKVQKEPIPEEQEIDFHPSVDGAEVSDSDGSQTEEAKETDPVQSQNQDDDLSRNDHTVQAAPSPDHKTSSPVRRTDMTLDTAHQKAVSPHLSCKMDAKSQSPSSPPTPSKHKEDAASASHQGTREKAGPCLPHPQSPALSQRSPARQPDPHIVPAMSSVPVPQLDTPTVPIHSSVCAAPGMEPVPPEPDEDGLEHLEQQAQQMVAYLQDGTLDDDHLLTKVLDQRVKGPSLDNQQKWYYKDPQGEIQGPFSNREMAEWYQAGYFPMTLLLRRVCDETFQPLGDIFKKWGRVPFSTPPTPRLGDLDPERLSRQQEITALYQMRHLHYQQLLFQQQYAVLAQQQKVALSSQQQQLPLPLQPLSMRIPEHTVIPPVVRALSVPESTSLWELPPAPTQPAVWEGSSVWDLPVEPTTQGTTREQLAQMDKVKAAKMEQERREAELRAKQEEEEQHRRKEAEEERKRREEEELARRKQEEALQRQKELALQKQMEEEERQRKKELQLLEERMRQEEERKRLEEERRRQEEERRKQLEERKRAEEERRRREEEKKREEDERRQLEEIQRKQEEAARWAREEEEAVRLLLEEARLKAEEEERNKREEAQRQKELQRQRQQQQEALRRLQLQQQQQQLAQMKLPSSSTWGQQVTPSAASQSALSLAEIQKLEEERERQKLQEQRHQQQELKALQQQQQQQQQKIPGWGTMSKPTGTTKSLLEIQQEEAGQMQKNHQQPGRNRPANISLPVAPVVNNHISSPTVGNSGSSVWGSLNNNLSPQWSSDSMSSIWGSTDVKGSSVGFWDDAVKEVAPRNATSKNKNNASKSAGSNSRQSKKVEQEEKLLRLFQGANKCQDDFTQWCEKTMHAINTAHSLDVPTFVSFLREVESPYEVHDYVCAYLGDTPEAKDFSKQFIERRTKQKTSQHRPQQDVAWVTCQTSQANSQPITLEAVQCAGRKKKKQKMVRADPSLLGFSVNASSERLNMGEIETAEDY</sequence>
<organism>
    <name type="scientific">Xenopus laevis</name>
    <name type="common">African clawed frog</name>
    <dbReference type="NCBI Taxonomy" id="8355"/>
    <lineage>
        <taxon>Eukaryota</taxon>
        <taxon>Metazoa</taxon>
        <taxon>Chordata</taxon>
        <taxon>Craniata</taxon>
        <taxon>Vertebrata</taxon>
        <taxon>Euteleostomi</taxon>
        <taxon>Amphibia</taxon>
        <taxon>Batrachia</taxon>
        <taxon>Anura</taxon>
        <taxon>Pipoidea</taxon>
        <taxon>Pipidae</taxon>
        <taxon>Xenopodinae</taxon>
        <taxon>Xenopus</taxon>
        <taxon>Xenopus</taxon>
    </lineage>
</organism>
<feature type="chain" id="PRO_0000270840" description="GRB10-interacting GYF protein 2">
    <location>
        <begin position="1"/>
        <end position="1239"/>
    </location>
</feature>
<feature type="domain" description="GYF" evidence="3">
    <location>
        <begin position="488"/>
        <end position="536"/>
    </location>
</feature>
<feature type="region of interest" description="Disordered" evidence="4">
    <location>
        <begin position="105"/>
        <end position="184"/>
    </location>
</feature>
<feature type="region of interest" description="Disordered" evidence="4">
    <location>
        <begin position="206"/>
        <end position="409"/>
    </location>
</feature>
<feature type="region of interest" description="Disordered" evidence="4">
    <location>
        <begin position="678"/>
        <end position="749"/>
    </location>
</feature>
<feature type="region of interest" description="Disordered" evidence="4">
    <location>
        <begin position="763"/>
        <end position="812"/>
    </location>
</feature>
<feature type="region of interest" description="Disordered" evidence="4">
    <location>
        <begin position="843"/>
        <end position="960"/>
    </location>
</feature>
<feature type="region of interest" description="Disordered" evidence="4">
    <location>
        <begin position="1057"/>
        <end position="1085"/>
    </location>
</feature>
<feature type="compositionally biased region" description="Basic and acidic residues" evidence="4">
    <location>
        <begin position="153"/>
        <end position="181"/>
    </location>
</feature>
<feature type="compositionally biased region" description="Acidic residues" evidence="4">
    <location>
        <begin position="231"/>
        <end position="240"/>
    </location>
</feature>
<feature type="compositionally biased region" description="Polar residues" evidence="4">
    <location>
        <begin position="241"/>
        <end position="252"/>
    </location>
</feature>
<feature type="compositionally biased region" description="Basic and acidic residues" evidence="4">
    <location>
        <begin position="257"/>
        <end position="272"/>
    </location>
</feature>
<feature type="compositionally biased region" description="Basic and acidic residues" evidence="4">
    <location>
        <begin position="318"/>
        <end position="331"/>
    </location>
</feature>
<feature type="compositionally biased region" description="Basic and acidic residues" evidence="4">
    <location>
        <begin position="678"/>
        <end position="737"/>
    </location>
</feature>
<feature type="compositionally biased region" description="Basic and acidic residues" evidence="4">
    <location>
        <begin position="843"/>
        <end position="862"/>
    </location>
</feature>
<feature type="compositionally biased region" description="Low complexity" evidence="4">
    <location>
        <begin position="863"/>
        <end position="885"/>
    </location>
</feature>
<feature type="compositionally biased region" description="Polar residues" evidence="4">
    <location>
        <begin position="888"/>
        <end position="900"/>
    </location>
</feature>
<feature type="compositionally biased region" description="Low complexity" evidence="4">
    <location>
        <begin position="901"/>
        <end position="913"/>
    </location>
</feature>
<feature type="compositionally biased region" description="Basic and acidic residues" evidence="4">
    <location>
        <begin position="914"/>
        <end position="933"/>
    </location>
</feature>
<feature type="compositionally biased region" description="Low complexity" evidence="4">
    <location>
        <begin position="934"/>
        <end position="948"/>
    </location>
</feature>
<feature type="compositionally biased region" description="Low complexity" evidence="4">
    <location>
        <begin position="1060"/>
        <end position="1077"/>
    </location>
</feature>
<keyword id="KW-1185">Reference proteome</keyword>
<comment type="function">
    <text evidence="1">Key component of the 4EHP-GYF2 complex, a multiprotein complex that acts as a repressor of translation initiation. In association with EIF4E2, assists ribosome-associated quality control (RQC) by sequestering the mRNA cap, blocking ribosome initiation and decreasing the translational load on problematic messages.</text>
</comment>
<comment type="subunit">
    <text evidence="1 2">Component of the 4EHP-GYF2 complex (By similarity).</text>
</comment>
<comment type="similarity">
    <text evidence="5">Belongs to the GIGYF family.</text>
</comment>
<reference key="1">
    <citation type="submission" date="2004-11" db="EMBL/GenBank/DDBJ databases">
        <authorList>
            <consortium name="NIH - Xenopus Gene Collection (XGC) project"/>
        </authorList>
    </citation>
    <scope>NUCLEOTIDE SEQUENCE [LARGE SCALE MRNA]</scope>
    <source>
        <tissue>Eye</tissue>
    </source>
</reference>
<name>GGYF2_XENLA</name>
<proteinExistence type="evidence at transcript level"/>